<evidence type="ECO:0000255" key="1">
    <source>
        <dbReference type="HAMAP-Rule" id="MF_00259"/>
    </source>
</evidence>
<protein>
    <recommendedName>
        <fullName evidence="1">Aminomethyltransferase</fullName>
        <ecNumber evidence="1">2.1.2.10</ecNumber>
    </recommendedName>
    <alternativeName>
        <fullName evidence="1">Glycine cleavage system T protein</fullName>
    </alternativeName>
</protein>
<reference key="1">
    <citation type="journal article" date="2008" name="Chem. Biol. Interact.">
        <title>Extending the Bacillus cereus group genomics to putative food-borne pathogens of different toxicity.</title>
        <authorList>
            <person name="Lapidus A."/>
            <person name="Goltsman E."/>
            <person name="Auger S."/>
            <person name="Galleron N."/>
            <person name="Segurens B."/>
            <person name="Dossat C."/>
            <person name="Land M.L."/>
            <person name="Broussolle V."/>
            <person name="Brillard J."/>
            <person name="Guinebretiere M.-H."/>
            <person name="Sanchis V."/>
            <person name="Nguen-the C."/>
            <person name="Lereclus D."/>
            <person name="Richardson P."/>
            <person name="Wincker P."/>
            <person name="Weissenbach J."/>
            <person name="Ehrlich S.D."/>
            <person name="Sorokin A."/>
        </authorList>
    </citation>
    <scope>NUCLEOTIDE SEQUENCE [LARGE SCALE GENOMIC DNA]</scope>
    <source>
        <strain>KBAB4</strain>
    </source>
</reference>
<dbReference type="EC" id="2.1.2.10" evidence="1"/>
<dbReference type="EMBL" id="CP000903">
    <property type="protein sequence ID" value="ABY45244.1"/>
    <property type="molecule type" value="Genomic_DNA"/>
</dbReference>
<dbReference type="RefSeq" id="WP_002034013.1">
    <property type="nucleotide sequence ID" value="NC_010184.1"/>
</dbReference>
<dbReference type="SMR" id="A9VH12"/>
<dbReference type="GeneID" id="66266195"/>
<dbReference type="KEGG" id="bwe:BcerKBAB4_4082"/>
<dbReference type="eggNOG" id="COG0404">
    <property type="taxonomic scope" value="Bacteria"/>
</dbReference>
<dbReference type="HOGENOM" id="CLU_007884_10_2_9"/>
<dbReference type="Proteomes" id="UP000002154">
    <property type="component" value="Chromosome"/>
</dbReference>
<dbReference type="GO" id="GO:0005829">
    <property type="term" value="C:cytosol"/>
    <property type="evidence" value="ECO:0007669"/>
    <property type="project" value="TreeGrafter"/>
</dbReference>
<dbReference type="GO" id="GO:0005960">
    <property type="term" value="C:glycine cleavage complex"/>
    <property type="evidence" value="ECO:0007669"/>
    <property type="project" value="InterPro"/>
</dbReference>
<dbReference type="GO" id="GO:0004047">
    <property type="term" value="F:aminomethyltransferase activity"/>
    <property type="evidence" value="ECO:0007669"/>
    <property type="project" value="UniProtKB-UniRule"/>
</dbReference>
<dbReference type="GO" id="GO:0008483">
    <property type="term" value="F:transaminase activity"/>
    <property type="evidence" value="ECO:0007669"/>
    <property type="project" value="UniProtKB-KW"/>
</dbReference>
<dbReference type="GO" id="GO:0019464">
    <property type="term" value="P:glycine decarboxylation via glycine cleavage system"/>
    <property type="evidence" value="ECO:0007669"/>
    <property type="project" value="UniProtKB-UniRule"/>
</dbReference>
<dbReference type="FunFam" id="2.40.30.110:FF:000003">
    <property type="entry name" value="Aminomethyltransferase"/>
    <property type="match status" value="1"/>
</dbReference>
<dbReference type="FunFam" id="3.30.70.1400:FF:000001">
    <property type="entry name" value="Aminomethyltransferase"/>
    <property type="match status" value="1"/>
</dbReference>
<dbReference type="FunFam" id="4.10.1250.10:FF:000001">
    <property type="entry name" value="Aminomethyltransferase"/>
    <property type="match status" value="1"/>
</dbReference>
<dbReference type="Gene3D" id="2.40.30.110">
    <property type="entry name" value="Aminomethyltransferase beta-barrel domains"/>
    <property type="match status" value="1"/>
</dbReference>
<dbReference type="Gene3D" id="3.30.70.1400">
    <property type="entry name" value="Aminomethyltransferase beta-barrel domains"/>
    <property type="match status" value="1"/>
</dbReference>
<dbReference type="Gene3D" id="4.10.1250.10">
    <property type="entry name" value="Aminomethyltransferase fragment"/>
    <property type="match status" value="1"/>
</dbReference>
<dbReference type="Gene3D" id="3.30.1360.120">
    <property type="entry name" value="Probable tRNA modification gtpase trme, domain 1"/>
    <property type="match status" value="1"/>
</dbReference>
<dbReference type="HAMAP" id="MF_00259">
    <property type="entry name" value="GcvT"/>
    <property type="match status" value="1"/>
</dbReference>
<dbReference type="InterPro" id="IPR006223">
    <property type="entry name" value="GCS_T"/>
</dbReference>
<dbReference type="InterPro" id="IPR022903">
    <property type="entry name" value="GCS_T_bac"/>
</dbReference>
<dbReference type="InterPro" id="IPR013977">
    <property type="entry name" value="GCST_C"/>
</dbReference>
<dbReference type="InterPro" id="IPR006222">
    <property type="entry name" value="GCV_T_N"/>
</dbReference>
<dbReference type="InterPro" id="IPR028896">
    <property type="entry name" value="GcvT/YgfZ/DmdA"/>
</dbReference>
<dbReference type="InterPro" id="IPR029043">
    <property type="entry name" value="GcvT/YgfZ_C"/>
</dbReference>
<dbReference type="InterPro" id="IPR027266">
    <property type="entry name" value="TrmE/GcvT_dom1"/>
</dbReference>
<dbReference type="NCBIfam" id="TIGR00528">
    <property type="entry name" value="gcvT"/>
    <property type="match status" value="1"/>
</dbReference>
<dbReference type="NCBIfam" id="NF001567">
    <property type="entry name" value="PRK00389.1"/>
    <property type="match status" value="1"/>
</dbReference>
<dbReference type="PANTHER" id="PTHR43757">
    <property type="entry name" value="AMINOMETHYLTRANSFERASE"/>
    <property type="match status" value="1"/>
</dbReference>
<dbReference type="PANTHER" id="PTHR43757:SF2">
    <property type="entry name" value="AMINOMETHYLTRANSFERASE, MITOCHONDRIAL"/>
    <property type="match status" value="1"/>
</dbReference>
<dbReference type="Pfam" id="PF01571">
    <property type="entry name" value="GCV_T"/>
    <property type="match status" value="1"/>
</dbReference>
<dbReference type="Pfam" id="PF08669">
    <property type="entry name" value="GCV_T_C"/>
    <property type="match status" value="1"/>
</dbReference>
<dbReference type="PIRSF" id="PIRSF006487">
    <property type="entry name" value="GcvT"/>
    <property type="match status" value="1"/>
</dbReference>
<dbReference type="SUPFAM" id="SSF101790">
    <property type="entry name" value="Aminomethyltransferase beta-barrel domain"/>
    <property type="match status" value="1"/>
</dbReference>
<dbReference type="SUPFAM" id="SSF103025">
    <property type="entry name" value="Folate-binding domain"/>
    <property type="match status" value="1"/>
</dbReference>
<proteinExistence type="inferred from homology"/>
<accession>A9VH12</accession>
<organism>
    <name type="scientific">Bacillus mycoides (strain KBAB4)</name>
    <name type="common">Bacillus weihenstephanensis</name>
    <dbReference type="NCBI Taxonomy" id="315730"/>
    <lineage>
        <taxon>Bacteria</taxon>
        <taxon>Bacillati</taxon>
        <taxon>Bacillota</taxon>
        <taxon>Bacilli</taxon>
        <taxon>Bacillales</taxon>
        <taxon>Bacillaceae</taxon>
        <taxon>Bacillus</taxon>
        <taxon>Bacillus cereus group</taxon>
    </lineage>
</organism>
<name>GCST_BACMK</name>
<keyword id="KW-0032">Aminotransferase</keyword>
<keyword id="KW-0808">Transferase</keyword>
<sequence>MITLQRTPLFDVYAKYGGKTVDFGGWELPVQFSSIKEEHEAVRTGAGLFDVSHMGEVEVKGVDSLAFLQRVVTNDVSTLKVGGAQYTAMCYENGGTVDDLLIYKRGEEDYLLVINASNIEKDYEWLASHVIGDAKVVNVSSEVAQLAIQGPKAEGILQKVVSEDLKEIKFFKFKNNILVDGIPALVSRTGYTGEDGFEIYCKSEDAAKLWEKLLEVGAEEGLKPCGLGARDTLRFEATLPLYGQELSKDITPIEAGIGFAVKPNKEADFFGKETLKEQKENGASRKLVGIEVIERGIPRTHYPVFIGEEKIGEVTSGTQSPTLKKSIGLALIDVKYAAVDTEVEIEIRNKRVKAVVVPTPFYKRSK</sequence>
<comment type="function">
    <text evidence="1">The glycine cleavage system catalyzes the degradation of glycine.</text>
</comment>
<comment type="catalytic activity">
    <reaction evidence="1">
        <text>N(6)-[(R)-S(8)-aminomethyldihydrolipoyl]-L-lysyl-[protein] + (6S)-5,6,7,8-tetrahydrofolate = N(6)-[(R)-dihydrolipoyl]-L-lysyl-[protein] + (6R)-5,10-methylene-5,6,7,8-tetrahydrofolate + NH4(+)</text>
        <dbReference type="Rhea" id="RHEA:16945"/>
        <dbReference type="Rhea" id="RHEA-COMP:10475"/>
        <dbReference type="Rhea" id="RHEA-COMP:10492"/>
        <dbReference type="ChEBI" id="CHEBI:15636"/>
        <dbReference type="ChEBI" id="CHEBI:28938"/>
        <dbReference type="ChEBI" id="CHEBI:57453"/>
        <dbReference type="ChEBI" id="CHEBI:83100"/>
        <dbReference type="ChEBI" id="CHEBI:83143"/>
        <dbReference type="EC" id="2.1.2.10"/>
    </reaction>
</comment>
<comment type="subunit">
    <text evidence="1">The glycine cleavage system is composed of four proteins: P, T, L and H.</text>
</comment>
<comment type="similarity">
    <text evidence="1">Belongs to the GcvT family.</text>
</comment>
<feature type="chain" id="PRO_1000114078" description="Aminomethyltransferase">
    <location>
        <begin position="1"/>
        <end position="366"/>
    </location>
</feature>
<gene>
    <name evidence="1" type="primary">gcvT</name>
    <name type="ordered locus">BcerKBAB4_4082</name>
</gene>